<organism>
    <name type="scientific">Arabidopsis thaliana</name>
    <name type="common">Mouse-ear cress</name>
    <dbReference type="NCBI Taxonomy" id="3702"/>
    <lineage>
        <taxon>Eukaryota</taxon>
        <taxon>Viridiplantae</taxon>
        <taxon>Streptophyta</taxon>
        <taxon>Embryophyta</taxon>
        <taxon>Tracheophyta</taxon>
        <taxon>Spermatophyta</taxon>
        <taxon>Magnoliopsida</taxon>
        <taxon>eudicotyledons</taxon>
        <taxon>Gunneridae</taxon>
        <taxon>Pentapetalae</taxon>
        <taxon>rosids</taxon>
        <taxon>malvids</taxon>
        <taxon>Brassicales</taxon>
        <taxon>Brassicaceae</taxon>
        <taxon>Camelineae</taxon>
        <taxon>Arabidopsis</taxon>
    </lineage>
</organism>
<protein>
    <recommendedName>
        <fullName>Long-chain-alcohol oxidase FAO4B</fullName>
        <ecNumber>1.1.3.20</ecNumber>
    </recommendedName>
    <alternativeName>
        <fullName>Long-chain fatty alcohol oxidase 4B</fullName>
    </alternativeName>
</protein>
<comment type="function">
    <text evidence="1">Long-chain fatty alcohol oxidase involved in the omega-oxidation pathway of lipid degradation.</text>
</comment>
<comment type="catalytic activity">
    <reaction>
        <text>a long-chain primary fatty alcohol + O2 = a long-chain fatty aldehyde + H2O2</text>
        <dbReference type="Rhea" id="RHEA:22756"/>
        <dbReference type="ChEBI" id="CHEBI:15379"/>
        <dbReference type="ChEBI" id="CHEBI:16240"/>
        <dbReference type="ChEBI" id="CHEBI:17176"/>
        <dbReference type="ChEBI" id="CHEBI:77396"/>
        <dbReference type="EC" id="1.1.3.20"/>
    </reaction>
</comment>
<comment type="subcellular location">
    <subcellularLocation>
        <location evidence="5">Membrane</location>
        <topology evidence="5">Multi-pass membrane protein</topology>
    </subcellularLocation>
</comment>
<comment type="similarity">
    <text evidence="5">Belongs to the GMC oxidoreductase family.</text>
</comment>
<feature type="chain" id="PRO_0000395506" description="Long-chain-alcohol oxidase FAO4B">
    <location>
        <begin position="1"/>
        <end position="748"/>
    </location>
</feature>
<feature type="transmembrane region" description="Helical" evidence="3">
    <location>
        <begin position="89"/>
        <end position="109"/>
    </location>
</feature>
<feature type="transmembrane region" description="Helical" evidence="3">
    <location>
        <begin position="140"/>
        <end position="160"/>
    </location>
</feature>
<feature type="region of interest" description="Disordered" evidence="4">
    <location>
        <begin position="1"/>
        <end position="25"/>
    </location>
</feature>
<feature type="compositionally biased region" description="Basic residues" evidence="4">
    <location>
        <begin position="1"/>
        <end position="18"/>
    </location>
</feature>
<feature type="active site" description="Proton acceptor" evidence="2">
    <location>
        <position position="679"/>
    </location>
</feature>
<feature type="binding site" evidence="3">
    <location>
        <begin position="238"/>
        <end position="253"/>
    </location>
    <ligand>
        <name>FAD</name>
        <dbReference type="ChEBI" id="CHEBI:57692"/>
    </ligand>
</feature>
<feature type="sequence conflict" description="In Ref. 4; AAK64154." evidence="5" ref="4">
    <original>K</original>
    <variation>R</variation>
    <location>
        <position position="118"/>
    </location>
</feature>
<proteinExistence type="evidence at transcript level"/>
<reference key="1">
    <citation type="journal article" date="2004" name="FEBS Lett.">
        <title>Functional identification of AtFao3, a membrane bound long chain alcohol oxidase in Arabidopsis thaliana.</title>
        <authorList>
            <person name="Cheng Q."/>
            <person name="Liu H.T."/>
            <person name="Bombelli P."/>
            <person name="Smith A."/>
            <person name="Slabas A.R."/>
        </authorList>
    </citation>
    <scope>NUCLEOTIDE SEQUENCE [MRNA]</scope>
</reference>
<reference key="2">
    <citation type="journal article" date="1999" name="Nature">
        <title>Sequence and analysis of chromosome 4 of the plant Arabidopsis thaliana.</title>
        <authorList>
            <person name="Mayer K.F.X."/>
            <person name="Schueller C."/>
            <person name="Wambutt R."/>
            <person name="Murphy G."/>
            <person name="Volckaert G."/>
            <person name="Pohl T."/>
            <person name="Duesterhoeft A."/>
            <person name="Stiekema W."/>
            <person name="Entian K.-D."/>
            <person name="Terryn N."/>
            <person name="Harris B."/>
            <person name="Ansorge W."/>
            <person name="Brandt P."/>
            <person name="Grivell L.A."/>
            <person name="Rieger M."/>
            <person name="Weichselgartner M."/>
            <person name="de Simone V."/>
            <person name="Obermaier B."/>
            <person name="Mache R."/>
            <person name="Mueller M."/>
            <person name="Kreis M."/>
            <person name="Delseny M."/>
            <person name="Puigdomenech P."/>
            <person name="Watson M."/>
            <person name="Schmidtheini T."/>
            <person name="Reichert B."/>
            <person name="Portetelle D."/>
            <person name="Perez-Alonso M."/>
            <person name="Boutry M."/>
            <person name="Bancroft I."/>
            <person name="Vos P."/>
            <person name="Hoheisel J."/>
            <person name="Zimmermann W."/>
            <person name="Wedler H."/>
            <person name="Ridley P."/>
            <person name="Langham S.-A."/>
            <person name="McCullagh B."/>
            <person name="Bilham L."/>
            <person name="Robben J."/>
            <person name="van der Schueren J."/>
            <person name="Grymonprez B."/>
            <person name="Chuang Y.-J."/>
            <person name="Vandenbussche F."/>
            <person name="Braeken M."/>
            <person name="Weltjens I."/>
            <person name="Voet M."/>
            <person name="Bastiaens I."/>
            <person name="Aert R."/>
            <person name="Defoor E."/>
            <person name="Weitzenegger T."/>
            <person name="Bothe G."/>
            <person name="Ramsperger U."/>
            <person name="Hilbert H."/>
            <person name="Braun M."/>
            <person name="Holzer E."/>
            <person name="Brandt A."/>
            <person name="Peters S."/>
            <person name="van Staveren M."/>
            <person name="Dirkse W."/>
            <person name="Mooijman P."/>
            <person name="Klein Lankhorst R."/>
            <person name="Rose M."/>
            <person name="Hauf J."/>
            <person name="Koetter P."/>
            <person name="Berneiser S."/>
            <person name="Hempel S."/>
            <person name="Feldpausch M."/>
            <person name="Lamberth S."/>
            <person name="Van den Daele H."/>
            <person name="De Keyser A."/>
            <person name="Buysshaert C."/>
            <person name="Gielen J."/>
            <person name="Villarroel R."/>
            <person name="De Clercq R."/>
            <person name="van Montagu M."/>
            <person name="Rogers J."/>
            <person name="Cronin A."/>
            <person name="Quail M.A."/>
            <person name="Bray-Allen S."/>
            <person name="Clark L."/>
            <person name="Doggett J."/>
            <person name="Hall S."/>
            <person name="Kay M."/>
            <person name="Lennard N."/>
            <person name="McLay K."/>
            <person name="Mayes R."/>
            <person name="Pettett A."/>
            <person name="Rajandream M.A."/>
            <person name="Lyne M."/>
            <person name="Benes V."/>
            <person name="Rechmann S."/>
            <person name="Borkova D."/>
            <person name="Bloecker H."/>
            <person name="Scharfe M."/>
            <person name="Grimm M."/>
            <person name="Loehnert T.-H."/>
            <person name="Dose S."/>
            <person name="de Haan M."/>
            <person name="Maarse A.C."/>
            <person name="Schaefer M."/>
            <person name="Mueller-Auer S."/>
            <person name="Gabel C."/>
            <person name="Fuchs M."/>
            <person name="Fartmann B."/>
            <person name="Granderath K."/>
            <person name="Dauner D."/>
            <person name="Herzl A."/>
            <person name="Neumann S."/>
            <person name="Argiriou A."/>
            <person name="Vitale D."/>
            <person name="Liguori R."/>
            <person name="Piravandi E."/>
            <person name="Massenet O."/>
            <person name="Quigley F."/>
            <person name="Clabauld G."/>
            <person name="Muendlein A."/>
            <person name="Felber R."/>
            <person name="Schnabl S."/>
            <person name="Hiller R."/>
            <person name="Schmidt W."/>
            <person name="Lecharny A."/>
            <person name="Aubourg S."/>
            <person name="Chefdor F."/>
            <person name="Cooke R."/>
            <person name="Berger C."/>
            <person name="Monfort A."/>
            <person name="Casacuberta E."/>
            <person name="Gibbons T."/>
            <person name="Weber N."/>
            <person name="Vandenbol M."/>
            <person name="Bargues M."/>
            <person name="Terol J."/>
            <person name="Torres A."/>
            <person name="Perez-Perez A."/>
            <person name="Purnelle B."/>
            <person name="Bent E."/>
            <person name="Johnson S."/>
            <person name="Tacon D."/>
            <person name="Jesse T."/>
            <person name="Heijnen L."/>
            <person name="Schwarz S."/>
            <person name="Scholler P."/>
            <person name="Heber S."/>
            <person name="Francs P."/>
            <person name="Bielke C."/>
            <person name="Frishman D."/>
            <person name="Haase D."/>
            <person name="Lemcke K."/>
            <person name="Mewes H.-W."/>
            <person name="Stocker S."/>
            <person name="Zaccaria P."/>
            <person name="Bevan M."/>
            <person name="Wilson R.K."/>
            <person name="de la Bastide M."/>
            <person name="Habermann K."/>
            <person name="Parnell L."/>
            <person name="Dedhia N."/>
            <person name="Gnoj L."/>
            <person name="Schutz K."/>
            <person name="Huang E."/>
            <person name="Spiegel L."/>
            <person name="Sekhon M."/>
            <person name="Murray J."/>
            <person name="Sheet P."/>
            <person name="Cordes M."/>
            <person name="Abu-Threideh J."/>
            <person name="Stoneking T."/>
            <person name="Kalicki J."/>
            <person name="Graves T."/>
            <person name="Harmon G."/>
            <person name="Edwards J."/>
            <person name="Latreille P."/>
            <person name="Courtney L."/>
            <person name="Cloud J."/>
            <person name="Abbott A."/>
            <person name="Scott K."/>
            <person name="Johnson D."/>
            <person name="Minx P."/>
            <person name="Bentley D."/>
            <person name="Fulton B."/>
            <person name="Miller N."/>
            <person name="Greco T."/>
            <person name="Kemp K."/>
            <person name="Kramer J."/>
            <person name="Fulton L."/>
            <person name="Mardis E."/>
            <person name="Dante M."/>
            <person name="Pepin K."/>
            <person name="Hillier L.W."/>
            <person name="Nelson J."/>
            <person name="Spieth J."/>
            <person name="Ryan E."/>
            <person name="Andrews S."/>
            <person name="Geisel C."/>
            <person name="Layman D."/>
            <person name="Du H."/>
            <person name="Ali J."/>
            <person name="Berghoff A."/>
            <person name="Jones K."/>
            <person name="Drone K."/>
            <person name="Cotton M."/>
            <person name="Joshu C."/>
            <person name="Antonoiu B."/>
            <person name="Zidanic M."/>
            <person name="Strong C."/>
            <person name="Sun H."/>
            <person name="Lamar B."/>
            <person name="Yordan C."/>
            <person name="Ma P."/>
            <person name="Zhong J."/>
            <person name="Preston R."/>
            <person name="Vil D."/>
            <person name="Shekher M."/>
            <person name="Matero A."/>
            <person name="Shah R."/>
            <person name="Swaby I.K."/>
            <person name="O'Shaughnessy A."/>
            <person name="Rodriguez M."/>
            <person name="Hoffman J."/>
            <person name="Till S."/>
            <person name="Granat S."/>
            <person name="Shohdy N."/>
            <person name="Hasegawa A."/>
            <person name="Hameed A."/>
            <person name="Lodhi M."/>
            <person name="Johnson A."/>
            <person name="Chen E."/>
            <person name="Marra M.A."/>
            <person name="Martienssen R."/>
            <person name="McCombie W.R."/>
        </authorList>
    </citation>
    <scope>NUCLEOTIDE SEQUENCE [LARGE SCALE GENOMIC DNA]</scope>
    <source>
        <strain>cv. Columbia</strain>
    </source>
</reference>
<reference key="3">
    <citation type="journal article" date="2017" name="Plant J.">
        <title>Araport11: a complete reannotation of the Arabidopsis thaliana reference genome.</title>
        <authorList>
            <person name="Cheng C.Y."/>
            <person name="Krishnakumar V."/>
            <person name="Chan A.P."/>
            <person name="Thibaud-Nissen F."/>
            <person name="Schobel S."/>
            <person name="Town C.D."/>
        </authorList>
    </citation>
    <scope>GENOME REANNOTATION</scope>
    <source>
        <strain>cv. Columbia</strain>
    </source>
</reference>
<reference key="4">
    <citation type="journal article" date="2003" name="Science">
        <title>Empirical analysis of transcriptional activity in the Arabidopsis genome.</title>
        <authorList>
            <person name="Yamada K."/>
            <person name="Lim J."/>
            <person name="Dale J.M."/>
            <person name="Chen H."/>
            <person name="Shinn P."/>
            <person name="Palm C.J."/>
            <person name="Southwick A.M."/>
            <person name="Wu H.C."/>
            <person name="Kim C.J."/>
            <person name="Nguyen M."/>
            <person name="Pham P.K."/>
            <person name="Cheuk R.F."/>
            <person name="Karlin-Newmann G."/>
            <person name="Liu S.X."/>
            <person name="Lam B."/>
            <person name="Sakano H."/>
            <person name="Wu T."/>
            <person name="Yu G."/>
            <person name="Miranda M."/>
            <person name="Quach H.L."/>
            <person name="Tripp M."/>
            <person name="Chang C.H."/>
            <person name="Lee J.M."/>
            <person name="Toriumi M.J."/>
            <person name="Chan M.M."/>
            <person name="Tang C.C."/>
            <person name="Onodera C.S."/>
            <person name="Deng J.M."/>
            <person name="Akiyama K."/>
            <person name="Ansari Y."/>
            <person name="Arakawa T."/>
            <person name="Banh J."/>
            <person name="Banno F."/>
            <person name="Bowser L."/>
            <person name="Brooks S.Y."/>
            <person name="Carninci P."/>
            <person name="Chao Q."/>
            <person name="Choy N."/>
            <person name="Enju A."/>
            <person name="Goldsmith A.D."/>
            <person name="Gurjal M."/>
            <person name="Hansen N.F."/>
            <person name="Hayashizaki Y."/>
            <person name="Johnson-Hopson C."/>
            <person name="Hsuan V.W."/>
            <person name="Iida K."/>
            <person name="Karnes M."/>
            <person name="Khan S."/>
            <person name="Koesema E."/>
            <person name="Ishida J."/>
            <person name="Jiang P.X."/>
            <person name="Jones T."/>
            <person name="Kawai J."/>
            <person name="Kamiya A."/>
            <person name="Meyers C."/>
            <person name="Nakajima M."/>
            <person name="Narusaka M."/>
            <person name="Seki M."/>
            <person name="Sakurai T."/>
            <person name="Satou M."/>
            <person name="Tamse R."/>
            <person name="Vaysberg M."/>
            <person name="Wallender E.K."/>
            <person name="Wong C."/>
            <person name="Yamamura Y."/>
            <person name="Yuan S."/>
            <person name="Shinozaki K."/>
            <person name="Davis R.W."/>
            <person name="Theologis A."/>
            <person name="Ecker J.R."/>
        </authorList>
    </citation>
    <scope>NUCLEOTIDE SEQUENCE [LARGE SCALE MRNA]</scope>
    <source>
        <strain>cv. Columbia</strain>
    </source>
</reference>
<keyword id="KW-0274">FAD</keyword>
<keyword id="KW-0285">Flavoprotein</keyword>
<keyword id="KW-0472">Membrane</keyword>
<keyword id="KW-0560">Oxidoreductase</keyword>
<keyword id="KW-1185">Reference proteome</keyword>
<keyword id="KW-0812">Transmembrane</keyword>
<keyword id="KW-1133">Transmembrane helix</keyword>
<sequence length="748" mass="81959">MEDVRRRNRGHPLLRSKKRGEGYNHGFSPSQIQSLAVICQTFLPPETTSEQQAVNSFHVASSTQPPFTDEVAEMIVKNGRSEAVKVLRIILMILSFRFGTLLLCGSLCLDKSWPFVLKFSQLPLDKREAILRNWSRQSGFLLPFRITFFLAKFYTLFYFFSQTDENLKNPALEAIGYCIDGTERSSNKKSEADEKRRPLEKGIIETMHESDVTITQSLTEKGVHVARDDGDNVYRIRCDAVVVGSGSGGGVAAANLAKAGLKVLVLEKGNYFTAHDYSGLEVPSMLELYEKGGLLTTVDGKFMLLAGSAVGGGTAVNWSASIRTPDHVLQEWSEGSKIKFFGSQEYQSAMDEVTIRIGVTERCVKHGFQNQVLRKGCERLGLQVESVPRNSPEDHYCGLCGYGCRAGAKNGTDQTWLVDAVENGAVILTGIKAERFVLVDNTSSSNERKKRCVGVFASSVGGKIGKKFIIEARVTVSSAGSLLTPPLMLSSGLKNPNIGRNLKLHPVLMTWGYFPEKDSEFSGKMYEGGIITSVHHMNDTESGCKAILENPLIGPASYAGLSPWVSGPDLKERMIKYGRTAHLFALVRDLGSGEVMMENEVTYRTTKKDRENLRAGLRQALRVSVAAGAVEVGTYRSDGQKMKCEAITKEAMEEFLDEVDAVGGVGTKGEYWTTYFSAHQMGSCRMGVTAEEGALDENGESWEAEGLFVCDGSILPSAVGVNPMITIQSTAYCISSKIVDSLQNKTKV</sequence>
<name>FAO4B_ARATH</name>
<evidence type="ECO:0000250" key="1"/>
<evidence type="ECO:0000250" key="2">
    <source>
        <dbReference type="UniProtKB" id="E4QP00"/>
    </source>
</evidence>
<evidence type="ECO:0000255" key="3"/>
<evidence type="ECO:0000256" key="4">
    <source>
        <dbReference type="SAM" id="MobiDB-lite"/>
    </source>
</evidence>
<evidence type="ECO:0000305" key="5"/>
<accession>Q94BP3</accession>
<accession>Q9M0H4</accession>
<gene>
    <name type="primary">FAO4B</name>
    <name type="ordered locus">At4g28570</name>
    <name type="ORF">T5F17.20</name>
</gene>
<dbReference type="EC" id="1.1.3.20"/>
<dbReference type="EMBL" id="AJ316231">
    <property type="protein sequence ID" value="CAC87644.1"/>
    <property type="molecule type" value="mRNA"/>
</dbReference>
<dbReference type="EMBL" id="AL161573">
    <property type="protein sequence ID" value="CAB81445.1"/>
    <property type="molecule type" value="Genomic_DNA"/>
</dbReference>
<dbReference type="EMBL" id="CP002687">
    <property type="protein sequence ID" value="AEE85508.1"/>
    <property type="molecule type" value="Genomic_DNA"/>
</dbReference>
<dbReference type="EMBL" id="CP002687">
    <property type="protein sequence ID" value="ANM67935.1"/>
    <property type="molecule type" value="Genomic_DNA"/>
</dbReference>
<dbReference type="EMBL" id="AY039977">
    <property type="protein sequence ID" value="AAK64154.1"/>
    <property type="molecule type" value="mRNA"/>
</dbReference>
<dbReference type="EMBL" id="BT001942">
    <property type="protein sequence ID" value="AAN71941.1"/>
    <property type="molecule type" value="mRNA"/>
</dbReference>
<dbReference type="PIR" id="T10651">
    <property type="entry name" value="T10651"/>
</dbReference>
<dbReference type="RefSeq" id="NP_001320082.1">
    <property type="nucleotide sequence ID" value="NM_001341924.1"/>
</dbReference>
<dbReference type="RefSeq" id="NP_194586.1">
    <property type="nucleotide sequence ID" value="NM_118999.5"/>
</dbReference>
<dbReference type="SMR" id="Q94BP3"/>
<dbReference type="FunCoup" id="Q94BP3">
    <property type="interactions" value="84"/>
</dbReference>
<dbReference type="STRING" id="3702.Q94BP3"/>
<dbReference type="PaxDb" id="3702-AT4G28570.1"/>
<dbReference type="ProteomicsDB" id="230851"/>
<dbReference type="EnsemblPlants" id="AT4G28570.1">
    <property type="protein sequence ID" value="AT4G28570.1"/>
    <property type="gene ID" value="AT4G28570"/>
</dbReference>
<dbReference type="EnsemblPlants" id="AT4G28570.2">
    <property type="protein sequence ID" value="AT4G28570.2"/>
    <property type="gene ID" value="AT4G28570"/>
</dbReference>
<dbReference type="GeneID" id="828975"/>
<dbReference type="Gramene" id="AT4G28570.1">
    <property type="protein sequence ID" value="AT4G28570.1"/>
    <property type="gene ID" value="AT4G28570"/>
</dbReference>
<dbReference type="Gramene" id="AT4G28570.2">
    <property type="protein sequence ID" value="AT4G28570.2"/>
    <property type="gene ID" value="AT4G28570"/>
</dbReference>
<dbReference type="KEGG" id="ath:AT4G28570"/>
<dbReference type="Araport" id="AT4G28570"/>
<dbReference type="TAIR" id="AT4G28570"/>
<dbReference type="eggNOG" id="ENOG502QSD8">
    <property type="taxonomic scope" value="Eukaryota"/>
</dbReference>
<dbReference type="HOGENOM" id="CLU_008878_1_1_1"/>
<dbReference type="InParanoid" id="Q94BP3"/>
<dbReference type="OMA" id="CDAFIPS"/>
<dbReference type="OrthoDB" id="269227at2759"/>
<dbReference type="PhylomeDB" id="Q94BP3"/>
<dbReference type="PRO" id="PR:Q94BP3"/>
<dbReference type="Proteomes" id="UP000006548">
    <property type="component" value="Chromosome 4"/>
</dbReference>
<dbReference type="ExpressionAtlas" id="Q94BP3">
    <property type="expression patterns" value="baseline and differential"/>
</dbReference>
<dbReference type="GO" id="GO:0005783">
    <property type="term" value="C:endoplasmic reticulum"/>
    <property type="evidence" value="ECO:0007005"/>
    <property type="project" value="TAIR"/>
</dbReference>
<dbReference type="GO" id="GO:0016020">
    <property type="term" value="C:membrane"/>
    <property type="evidence" value="ECO:0007669"/>
    <property type="project" value="UniProtKB-SubCell"/>
</dbReference>
<dbReference type="GO" id="GO:0050660">
    <property type="term" value="F:flavin adenine dinucleotide binding"/>
    <property type="evidence" value="ECO:0007669"/>
    <property type="project" value="InterPro"/>
</dbReference>
<dbReference type="GO" id="GO:0046577">
    <property type="term" value="F:long-chain-alcohol oxidase activity"/>
    <property type="evidence" value="ECO:0007669"/>
    <property type="project" value="UniProtKB-EC"/>
</dbReference>
<dbReference type="Gene3D" id="3.50.50.60">
    <property type="entry name" value="FAD/NAD(P)-binding domain"/>
    <property type="match status" value="2"/>
</dbReference>
<dbReference type="InterPro" id="IPR003953">
    <property type="entry name" value="FAD-dep_OxRdtase_2_FAD-bd"/>
</dbReference>
<dbReference type="InterPro" id="IPR036188">
    <property type="entry name" value="FAD/NAD-bd_sf"/>
</dbReference>
<dbReference type="InterPro" id="IPR000172">
    <property type="entry name" value="GMC_OxRdtase_N"/>
</dbReference>
<dbReference type="InterPro" id="IPR007867">
    <property type="entry name" value="GMC_OxRtase_C"/>
</dbReference>
<dbReference type="InterPro" id="IPR012400">
    <property type="entry name" value="Long_Oxdase"/>
</dbReference>
<dbReference type="PANTHER" id="PTHR46056">
    <property type="entry name" value="LONG-CHAIN-ALCOHOL OXIDASE"/>
    <property type="match status" value="1"/>
</dbReference>
<dbReference type="PANTHER" id="PTHR46056:SF12">
    <property type="entry name" value="LONG-CHAIN-ALCOHOL OXIDASE"/>
    <property type="match status" value="1"/>
</dbReference>
<dbReference type="Pfam" id="PF00890">
    <property type="entry name" value="FAD_binding_2"/>
    <property type="match status" value="1"/>
</dbReference>
<dbReference type="Pfam" id="PF05199">
    <property type="entry name" value="GMC_oxred_C"/>
    <property type="match status" value="1"/>
</dbReference>
<dbReference type="Pfam" id="PF00732">
    <property type="entry name" value="GMC_oxred_N"/>
    <property type="match status" value="1"/>
</dbReference>
<dbReference type="PIRSF" id="PIRSF028937">
    <property type="entry name" value="Lg_Ch_AO"/>
    <property type="match status" value="1"/>
</dbReference>
<dbReference type="SUPFAM" id="SSF51905">
    <property type="entry name" value="FAD/NAD(P)-binding domain"/>
    <property type="match status" value="1"/>
</dbReference>